<evidence type="ECO:0000250" key="1">
    <source>
        <dbReference type="UniProtKB" id="Q9DCF1"/>
    </source>
</evidence>
<evidence type="ECO:0000255" key="2"/>
<evidence type="ECO:0000255" key="3">
    <source>
        <dbReference type="PROSITE-ProRule" id="PRU00114"/>
    </source>
</evidence>
<evidence type="ECO:0000256" key="4">
    <source>
        <dbReference type="SAM" id="MobiDB-lite"/>
    </source>
</evidence>
<evidence type="ECO:0000269" key="5">
    <source>
    </source>
</evidence>
<evidence type="ECO:0000269" key="6">
    <source>
    </source>
</evidence>
<evidence type="ECO:0000269" key="7">
    <source>
    </source>
</evidence>
<evidence type="ECO:0000269" key="8">
    <source>
    </source>
</evidence>
<evidence type="ECO:0000303" key="9">
    <source>
    </source>
</evidence>
<evidence type="ECO:0000303" key="10">
    <source>
    </source>
</evidence>
<evidence type="ECO:0000303" key="11">
    <source>
    </source>
</evidence>
<evidence type="ECO:0000303" key="12">
    <source>
    </source>
</evidence>
<evidence type="ECO:0000305" key="13"/>
<comment type="function">
    <text evidence="8">In neurons, modulates the degradation of NMDA receptor GRIN2B subunit. Plays a role in the regulation of neuronal excitability.</text>
</comment>
<comment type="subunit">
    <text evidence="1">Interacts with GRIN2B.</text>
</comment>
<comment type="interaction">
    <interactant intactId="EBI-10260688">
        <id>Q86YD3</id>
    </interactant>
    <interactant intactId="EBI-374781">
        <id>O76003</id>
        <label>GLRX3</label>
    </interactant>
    <organismsDiffer>false</organismsDiffer>
    <experiments>4</experiments>
</comment>
<comment type="interaction">
    <interactant intactId="EBI-10260688">
        <id>Q86YD3</id>
    </interactant>
    <interactant intactId="EBI-536715">
        <id>P53611</id>
        <label>RABGGTB</label>
    </interactant>
    <organismsDiffer>false</organismsDiffer>
    <experiments>3</experiments>
</comment>
<comment type="subcellular location">
    <molecule>Isoform 1</molecule>
    <subcellularLocation>
        <location evidence="13">Cell membrane</location>
        <topology evidence="13">Single-pass type I membrane protein</topology>
    </subcellularLocation>
</comment>
<comment type="subcellular location">
    <molecule>Isoform 4</molecule>
    <subcellularLocation>
        <location evidence="13">Cell membrane</location>
        <topology evidence="13">Single-pass type I membrane protein</topology>
    </subcellularLocation>
</comment>
<comment type="subcellular location">
    <molecule>Isoform 2</molecule>
    <subcellularLocation>
        <location evidence="13">Secreted</location>
    </subcellularLocation>
</comment>
<comment type="subcellular location">
    <molecule>Isoform 3</molecule>
    <subcellularLocation>
        <location evidence="13">Secreted</location>
    </subcellularLocation>
</comment>
<comment type="subcellular location">
    <subcellularLocation>
        <location evidence="1">Late endosome</location>
    </subcellularLocation>
    <subcellularLocation>
        <location evidence="1">Lysosome</location>
    </subcellularLocation>
</comment>
<comment type="alternative products">
    <event type="alternative splicing"/>
    <isoform>
        <id>Q86YD3-1</id>
        <name>1</name>
        <sequence type="displayed"/>
    </isoform>
    <isoform>
        <id>Q86YD3-2</id>
        <name>2</name>
        <sequence type="described" ref="VSP_012940"/>
    </isoform>
    <isoform>
        <id>Q86YD3-3</id>
        <name>3</name>
        <sequence type="described" ref="VSP_012939 VSP_012940"/>
    </isoform>
    <isoform>
        <id>Q86YD3-4</id>
        <name>4</name>
        <sequence type="described" ref="VSP_012941"/>
    </isoform>
    <isoform>
        <id>Q86YD3-5</id>
        <name>5</name>
        <sequence type="described" ref="VSP_012940 VSP_045635 VSP_012941"/>
    </isoform>
</comment>
<comment type="tissue specificity">
    <text evidence="8">Expressed throughout the brain with higher levels in the pyramidal cell layer of the hippocampal CA1 and CA3 regions. Also highly expressed within the hippocampal dentate gyrus region and cerebellum and in scattered neurons in the cerebral cortex.</text>
</comment>
<protein>
    <recommendedName>
        <fullName>Transmembrane protein 25</fullName>
    </recommendedName>
</protein>
<accession>Q86YD3</accession>
<accession>A8K8J4</accession>
<accession>B0YJA6</accession>
<accession>B0YJA7</accession>
<accession>B0YJA9</accession>
<accession>G5E9U4</accession>
<accession>Q6UW89</accession>
<accession>Q86UA7</accession>
<accession>Q8NBL5</accession>
<accession>Q96KA6</accession>
<accession>Q96MW9</accession>
<name>TMM25_HUMAN</name>
<keyword id="KW-0025">Alternative splicing</keyword>
<keyword id="KW-1003">Cell membrane</keyword>
<keyword id="KW-0903">Direct protein sequencing</keyword>
<keyword id="KW-1015">Disulfide bond</keyword>
<keyword id="KW-0967">Endosome</keyword>
<keyword id="KW-0325">Glycoprotein</keyword>
<keyword id="KW-0393">Immunoglobulin domain</keyword>
<keyword id="KW-0458">Lysosome</keyword>
<keyword id="KW-0472">Membrane</keyword>
<keyword id="KW-1267">Proteomics identification</keyword>
<keyword id="KW-1185">Reference proteome</keyword>
<keyword id="KW-0964">Secreted</keyword>
<keyword id="KW-0732">Signal</keyword>
<keyword id="KW-0812">Transmembrane</keyword>
<keyword id="KW-1133">Transmembrane helix</keyword>
<gene>
    <name type="primary">TMEM25</name>
    <name type="ORF">UNQ2531/PRO6030</name>
</gene>
<feature type="signal peptide" evidence="5">
    <location>
        <begin position="1"/>
        <end position="26"/>
    </location>
</feature>
<feature type="chain" id="PRO_0000014984" description="Transmembrane protein 25">
    <location>
        <begin position="27"/>
        <end position="366"/>
    </location>
</feature>
<feature type="topological domain" description="Extracellular" evidence="2">
    <location>
        <begin position="27"/>
        <end position="232"/>
    </location>
</feature>
<feature type="transmembrane region" description="Helical" evidence="2">
    <location>
        <begin position="233"/>
        <end position="253"/>
    </location>
</feature>
<feature type="topological domain" description="Cytoplasmic" evidence="2">
    <location>
        <begin position="254"/>
        <end position="366"/>
    </location>
</feature>
<feature type="domain" description="Ig-like">
    <location>
        <begin position="30"/>
        <end position="123"/>
    </location>
</feature>
<feature type="region of interest" description="Disordered" evidence="4">
    <location>
        <begin position="299"/>
        <end position="335"/>
    </location>
</feature>
<feature type="compositionally biased region" description="Polar residues" evidence="4">
    <location>
        <begin position="299"/>
        <end position="308"/>
    </location>
</feature>
<feature type="glycosylation site" description="N-linked (GlcNAc...) asparagine" evidence="2">
    <location>
        <position position="106"/>
    </location>
</feature>
<feature type="glycosylation site" description="N-linked (GlcNAc...) asparagine" evidence="2">
    <location>
        <position position="162"/>
    </location>
</feature>
<feature type="glycosylation site" description="N-linked (GlcNAc...) asparagine" evidence="2">
    <location>
        <position position="175"/>
    </location>
</feature>
<feature type="glycosylation site" description="N-linked (GlcNAc...) asparagine" evidence="2">
    <location>
        <position position="192"/>
    </location>
</feature>
<feature type="glycosylation site" description="N-linked (GlcNAc...) asparagine" evidence="2">
    <location>
        <position position="205"/>
    </location>
</feature>
<feature type="disulfide bond" evidence="3">
    <location>
        <begin position="52"/>
        <end position="107"/>
    </location>
</feature>
<feature type="splice variant" id="VSP_012939" description="In isoform 3." evidence="10">
    <original>GWGELEPQIDGQTWAERALRENERHAFTCRVAGGPGTPRLAWYLDGQLQEASTSRLLSVGGEAFSGGTSTFTVTAHRAQHELNCSLQDPRSGRSANASVILNVQF</original>
    <variation>V</variation>
    <location>
        <begin position="24"/>
        <end position="128"/>
    </location>
</feature>
<feature type="splice variant" id="VSP_012940" description="In isoform 2, isoform 3 and isoform 5." evidence="9 10 11 12">
    <location>
        <begin position="225"/>
        <end position="268"/>
    </location>
</feature>
<feature type="splice variant" id="VSP_045635" description="In isoform 5." evidence="12">
    <location>
        <position position="313"/>
    </location>
</feature>
<feature type="splice variant" id="VSP_012941" description="In isoform 4 and isoform 5." evidence="10 12">
    <original>FIRLPVLGYIYRVSSVSSDEIWL</original>
    <variation>RRNQDKDA</variation>
    <location>
        <begin position="344"/>
        <end position="366"/>
    </location>
</feature>
<feature type="sequence variant" id="VAR_033623" description="In dbSNP:rs35915434.">
    <original>W</original>
    <variation>C</variation>
    <location>
        <position position="25"/>
    </location>
</feature>
<feature type="sequence variant" id="VAR_021391" description="In dbSNP:rs12289253." evidence="6 7">
    <original>Q</original>
    <variation>R</variation>
    <location>
        <position position="342"/>
    </location>
</feature>
<feature type="sequence conflict" description="In Ref. 3; BAC11620." evidence="13" ref="3">
    <original>I</original>
    <variation>V</variation>
    <location>
        <position position="277"/>
    </location>
</feature>
<proteinExistence type="evidence at protein level"/>
<sequence length="366" mass="39285">MALPPGPAALRHTLLLLPALLSSGWGELEPQIDGQTWAERALRENERHAFTCRVAGGPGTPRLAWYLDGQLQEASTSRLLSVGGEAFSGGTSTFTVTAHRAQHELNCSLQDPRSGRSANASVILNVQFKPEIAQVGAKYQEAQGPGLLVVLFALVRANPPANVTWIDQDGPVTVNTSDFLVLDAQNYPWLTNHTVQLQLRSLAHNLSVVATNDVGVTSASLPAPGLLATRVEVPLLGIVVAAGLALGTLVGFSTLVACLVCRKEKKTKGPSRHPSLISSDSNNLKLNNVRLPRENMSLPSNLQLNDLTPDSRAVKPADRQMAQNNSRPELLDPEPGGLLTSQGFIRLPVLGYIYRVSSVSSDEIWL</sequence>
<organism>
    <name type="scientific">Homo sapiens</name>
    <name type="common">Human</name>
    <dbReference type="NCBI Taxonomy" id="9606"/>
    <lineage>
        <taxon>Eukaryota</taxon>
        <taxon>Metazoa</taxon>
        <taxon>Chordata</taxon>
        <taxon>Craniata</taxon>
        <taxon>Vertebrata</taxon>
        <taxon>Euteleostomi</taxon>
        <taxon>Mammalia</taxon>
        <taxon>Eutheria</taxon>
        <taxon>Euarchontoglires</taxon>
        <taxon>Primates</taxon>
        <taxon>Haplorrhini</taxon>
        <taxon>Catarrhini</taxon>
        <taxon>Hominidae</taxon>
        <taxon>Homo</taxon>
    </lineage>
</organism>
<dbReference type="EMBL" id="AY358919">
    <property type="protein sequence ID" value="AAQ89278.1"/>
    <property type="molecule type" value="mRNA"/>
</dbReference>
<dbReference type="EMBL" id="AK027305">
    <property type="protein sequence ID" value="BAB55029.1"/>
    <property type="molecule type" value="mRNA"/>
</dbReference>
<dbReference type="EMBL" id="AK056325">
    <property type="protein sequence ID" value="BAB71151.1"/>
    <property type="molecule type" value="mRNA"/>
</dbReference>
<dbReference type="EMBL" id="AK292359">
    <property type="protein sequence ID" value="BAF85048.1"/>
    <property type="molecule type" value="mRNA"/>
</dbReference>
<dbReference type="EMBL" id="AK075437">
    <property type="protein sequence ID" value="BAC11620.1"/>
    <property type="molecule type" value="mRNA"/>
</dbReference>
<dbReference type="EMBL" id="EF445037">
    <property type="protein sequence ID" value="ACA06084.1"/>
    <property type="molecule type" value="Genomic_DNA"/>
</dbReference>
<dbReference type="EMBL" id="EF445037">
    <property type="protein sequence ID" value="ACA06085.1"/>
    <property type="molecule type" value="Genomic_DNA"/>
</dbReference>
<dbReference type="EMBL" id="EF445037">
    <property type="protein sequence ID" value="ACA06086.1"/>
    <property type="molecule type" value="Genomic_DNA"/>
</dbReference>
<dbReference type="EMBL" id="EF445037">
    <property type="protein sequence ID" value="ACA06087.1"/>
    <property type="molecule type" value="Genomic_DNA"/>
</dbReference>
<dbReference type="EMBL" id="AP000941">
    <property type="status" value="NOT_ANNOTATED_CDS"/>
    <property type="molecule type" value="Genomic_DNA"/>
</dbReference>
<dbReference type="EMBL" id="CH471065">
    <property type="protein sequence ID" value="EAW67388.1"/>
    <property type="molecule type" value="Genomic_DNA"/>
</dbReference>
<dbReference type="EMBL" id="CH471065">
    <property type="protein sequence ID" value="EAW67389.1"/>
    <property type="molecule type" value="Genomic_DNA"/>
</dbReference>
<dbReference type="EMBL" id="CH471065">
    <property type="protein sequence ID" value="EAW67393.1"/>
    <property type="molecule type" value="Genomic_DNA"/>
</dbReference>
<dbReference type="EMBL" id="BC042896">
    <property type="protein sequence ID" value="AAH42896.1"/>
    <property type="molecule type" value="mRNA"/>
</dbReference>
<dbReference type="EMBL" id="BC051841">
    <property type="protein sequence ID" value="AAH51841.1"/>
    <property type="molecule type" value="mRNA"/>
</dbReference>
<dbReference type="CCDS" id="CCDS44745.1">
    <molecule id="Q86YD3-4"/>
</dbReference>
<dbReference type="CCDS" id="CCDS44746.1">
    <molecule id="Q86YD3-5"/>
</dbReference>
<dbReference type="CCDS" id="CCDS44747.1">
    <molecule id="Q86YD3-2"/>
</dbReference>
<dbReference type="CCDS" id="CCDS44748.1">
    <molecule id="Q86YD3-3"/>
</dbReference>
<dbReference type="CCDS" id="CCDS8398.1">
    <molecule id="Q86YD3-1"/>
</dbReference>
<dbReference type="RefSeq" id="NP_001137506.1">
    <molecule id="Q86YD3-2"/>
    <property type="nucleotide sequence ID" value="NM_001144034.2"/>
</dbReference>
<dbReference type="RefSeq" id="NP_001137507.1">
    <molecule id="Q86YD3-2"/>
    <property type="nucleotide sequence ID" value="NM_001144035.2"/>
</dbReference>
<dbReference type="RefSeq" id="NP_001137508.1">
    <molecule id="Q86YD3-3"/>
    <property type="nucleotide sequence ID" value="NM_001144036.2"/>
</dbReference>
<dbReference type="RefSeq" id="NP_001137509.1">
    <molecule id="Q86YD3-4"/>
    <property type="nucleotide sequence ID" value="NM_001144037.2"/>
</dbReference>
<dbReference type="RefSeq" id="NP_001137510.1">
    <molecule id="Q86YD3-5"/>
    <property type="nucleotide sequence ID" value="NM_001144038.2"/>
</dbReference>
<dbReference type="RefSeq" id="NP_001305684.1">
    <property type="nucleotide sequence ID" value="NM_001318755.1"/>
</dbReference>
<dbReference type="RefSeq" id="NP_001305686.1">
    <property type="nucleotide sequence ID" value="NM_001318757.1"/>
</dbReference>
<dbReference type="RefSeq" id="NP_116169.2">
    <molecule id="Q86YD3-1"/>
    <property type="nucleotide sequence ID" value="NM_032780.3"/>
</dbReference>
<dbReference type="RefSeq" id="XP_016873911.1">
    <molecule id="Q86YD3-1"/>
    <property type="nucleotide sequence ID" value="XM_017018422.3"/>
</dbReference>
<dbReference type="RefSeq" id="XP_024304492.1">
    <molecule id="Q86YD3-2"/>
    <property type="nucleotide sequence ID" value="XM_024448724.2"/>
</dbReference>
<dbReference type="RefSeq" id="XP_047283677.1">
    <molecule id="Q86YD3-1"/>
    <property type="nucleotide sequence ID" value="XM_047427721.1"/>
</dbReference>
<dbReference type="RefSeq" id="XP_047283681.1">
    <molecule id="Q86YD3-4"/>
    <property type="nucleotide sequence ID" value="XM_047427725.1"/>
</dbReference>
<dbReference type="RefSeq" id="XP_047283682.1">
    <molecule id="Q86YD3-4"/>
    <property type="nucleotide sequence ID" value="XM_047427726.1"/>
</dbReference>
<dbReference type="RefSeq" id="XP_047283699.1">
    <molecule id="Q86YD3-5"/>
    <property type="nucleotide sequence ID" value="XM_047427743.1"/>
</dbReference>
<dbReference type="RefSeq" id="XP_054226195.1">
    <molecule id="Q86YD3-1"/>
    <property type="nucleotide sequence ID" value="XM_054370220.1"/>
</dbReference>
<dbReference type="RefSeq" id="XP_054226199.1">
    <molecule id="Q86YD3-4"/>
    <property type="nucleotide sequence ID" value="XM_054370224.1"/>
</dbReference>
<dbReference type="RefSeq" id="XP_054226200.1">
    <molecule id="Q86YD3-4"/>
    <property type="nucleotide sequence ID" value="XM_054370225.1"/>
</dbReference>
<dbReference type="RefSeq" id="XP_054226206.1">
    <molecule id="Q86YD3-2"/>
    <property type="nucleotide sequence ID" value="XM_054370231.1"/>
</dbReference>
<dbReference type="RefSeq" id="XP_054226211.1">
    <molecule id="Q86YD3-5"/>
    <property type="nucleotide sequence ID" value="XM_054370236.1"/>
</dbReference>
<dbReference type="BioGRID" id="124311">
    <property type="interactions" value="146"/>
</dbReference>
<dbReference type="FunCoup" id="Q86YD3">
    <property type="interactions" value="327"/>
</dbReference>
<dbReference type="IntAct" id="Q86YD3">
    <property type="interactions" value="117"/>
</dbReference>
<dbReference type="MINT" id="Q86YD3"/>
<dbReference type="STRING" id="9606.ENSP00000431548"/>
<dbReference type="TCDB" id="8.A.23.3.1">
    <property type="family name" value="the basigin (basigin) family"/>
</dbReference>
<dbReference type="GlyCosmos" id="Q86YD3">
    <property type="glycosylation" value="5 sites, No reported glycans"/>
</dbReference>
<dbReference type="GlyGen" id="Q86YD3">
    <property type="glycosylation" value="8 sites, 7 N-linked glycans (4 sites)"/>
</dbReference>
<dbReference type="iPTMnet" id="Q86YD3"/>
<dbReference type="PhosphoSitePlus" id="Q86YD3"/>
<dbReference type="BioMuta" id="TMEM25"/>
<dbReference type="jPOST" id="Q86YD3"/>
<dbReference type="MassIVE" id="Q86YD3"/>
<dbReference type="PaxDb" id="9606-ENSP00000315635"/>
<dbReference type="PeptideAtlas" id="Q86YD3"/>
<dbReference type="ProteomicsDB" id="34043"/>
<dbReference type="ProteomicsDB" id="70400">
    <molecule id="Q86YD3-1"/>
</dbReference>
<dbReference type="ProteomicsDB" id="70401">
    <molecule id="Q86YD3-2"/>
</dbReference>
<dbReference type="ProteomicsDB" id="70402">
    <molecule id="Q86YD3-3"/>
</dbReference>
<dbReference type="ProteomicsDB" id="70403">
    <molecule id="Q86YD3-4"/>
</dbReference>
<dbReference type="Antibodypedia" id="2512">
    <property type="antibodies" value="89 antibodies from 19 providers"/>
</dbReference>
<dbReference type="DNASU" id="84866"/>
<dbReference type="Ensembl" id="ENST00000313236.10">
    <molecule id="Q86YD3-1"/>
    <property type="protein sequence ID" value="ENSP00000315635.5"/>
    <property type="gene ID" value="ENSG00000149582.16"/>
</dbReference>
<dbReference type="Ensembl" id="ENST00000354064.11">
    <molecule id="Q86YD3-3"/>
    <property type="protein sequence ID" value="ENSP00000278959.8"/>
    <property type="gene ID" value="ENSG00000149582.16"/>
</dbReference>
<dbReference type="Ensembl" id="ENST00000354284.8">
    <molecule id="Q86YD3-4"/>
    <property type="protein sequence ID" value="ENSP00000346237.4"/>
    <property type="gene ID" value="ENSG00000149582.16"/>
</dbReference>
<dbReference type="Ensembl" id="ENST00000359862.8">
    <molecule id="Q86YD3-2"/>
    <property type="protein sequence ID" value="ENSP00000352924.4"/>
    <property type="gene ID" value="ENSG00000149582.16"/>
</dbReference>
<dbReference type="Ensembl" id="ENST00000411589.6">
    <molecule id="Q86YD3-2"/>
    <property type="protein sequence ID" value="ENSP00000411882.2"/>
    <property type="gene ID" value="ENSG00000149582.16"/>
</dbReference>
<dbReference type="Ensembl" id="ENST00000442938.6">
    <molecule id="Q86YD3-5"/>
    <property type="protein sequence ID" value="ENSP00000416071.2"/>
    <property type="gene ID" value="ENSG00000149582.16"/>
</dbReference>
<dbReference type="Ensembl" id="ENST00000524725.5">
    <molecule id="Q86YD3-2"/>
    <property type="protein sequence ID" value="ENSP00000431205.1"/>
    <property type="gene ID" value="ENSG00000149582.16"/>
</dbReference>
<dbReference type="GeneID" id="84866"/>
<dbReference type="KEGG" id="hsa:84866"/>
<dbReference type="MANE-Select" id="ENST00000313236.10">
    <property type="protein sequence ID" value="ENSP00000315635.5"/>
    <property type="RefSeq nucleotide sequence ID" value="NM_032780.4"/>
    <property type="RefSeq protein sequence ID" value="NP_116169.2"/>
</dbReference>
<dbReference type="UCSC" id="uc001pth.4">
    <molecule id="Q86YD3-1"/>
    <property type="organism name" value="human"/>
</dbReference>
<dbReference type="AGR" id="HGNC:25890"/>
<dbReference type="CTD" id="84866"/>
<dbReference type="DisGeNET" id="84866"/>
<dbReference type="GeneCards" id="TMEM25"/>
<dbReference type="HGNC" id="HGNC:25890">
    <property type="gene designation" value="TMEM25"/>
</dbReference>
<dbReference type="HPA" id="ENSG00000149582">
    <property type="expression patterns" value="Low tissue specificity"/>
</dbReference>
<dbReference type="MIM" id="613934">
    <property type="type" value="gene"/>
</dbReference>
<dbReference type="neXtProt" id="NX_Q86YD3"/>
<dbReference type="OpenTargets" id="ENSG00000149582"/>
<dbReference type="PharmGKB" id="PA134919013"/>
<dbReference type="VEuPathDB" id="HostDB:ENSG00000149582"/>
<dbReference type="eggNOG" id="KOG4555">
    <property type="taxonomic scope" value="Eukaryota"/>
</dbReference>
<dbReference type="GeneTree" id="ENSGT01080000257333"/>
<dbReference type="InParanoid" id="Q86YD3"/>
<dbReference type="OMA" id="CVCLGRW"/>
<dbReference type="OrthoDB" id="8655664at2759"/>
<dbReference type="PAN-GO" id="Q86YD3">
    <property type="GO annotations" value="1 GO annotation based on evolutionary models"/>
</dbReference>
<dbReference type="PhylomeDB" id="Q86YD3"/>
<dbReference type="TreeFam" id="TF333068"/>
<dbReference type="PathwayCommons" id="Q86YD3"/>
<dbReference type="SignaLink" id="Q86YD3"/>
<dbReference type="BioGRID-ORCS" id="84866">
    <property type="hits" value="10 hits in 1149 CRISPR screens"/>
</dbReference>
<dbReference type="ChiTaRS" id="TMEM25">
    <property type="organism name" value="human"/>
</dbReference>
<dbReference type="GeneWiki" id="TMEM25"/>
<dbReference type="GenomeRNAi" id="84866"/>
<dbReference type="Pharos" id="Q86YD3">
    <property type="development level" value="Tdark"/>
</dbReference>
<dbReference type="PRO" id="PR:Q86YD3"/>
<dbReference type="Proteomes" id="UP000005640">
    <property type="component" value="Chromosome 11"/>
</dbReference>
<dbReference type="RNAct" id="Q86YD3">
    <property type="molecule type" value="protein"/>
</dbReference>
<dbReference type="Bgee" id="ENSG00000149582">
    <property type="expression patterns" value="Expressed in right hemisphere of cerebellum and 127 other cell types or tissues"/>
</dbReference>
<dbReference type="ExpressionAtlas" id="Q86YD3">
    <property type="expression patterns" value="baseline and differential"/>
</dbReference>
<dbReference type="GO" id="GO:0005576">
    <property type="term" value="C:extracellular region"/>
    <property type="evidence" value="ECO:0007669"/>
    <property type="project" value="UniProtKB-SubCell"/>
</dbReference>
<dbReference type="GO" id="GO:0005770">
    <property type="term" value="C:late endosome"/>
    <property type="evidence" value="ECO:0000250"/>
    <property type="project" value="UniProtKB"/>
</dbReference>
<dbReference type="GO" id="GO:0005764">
    <property type="term" value="C:lysosome"/>
    <property type="evidence" value="ECO:0000250"/>
    <property type="project" value="UniProtKB"/>
</dbReference>
<dbReference type="GO" id="GO:0005886">
    <property type="term" value="C:plasma membrane"/>
    <property type="evidence" value="ECO:0007669"/>
    <property type="project" value="UniProtKB-SubCell"/>
</dbReference>
<dbReference type="GO" id="GO:0090394">
    <property type="term" value="P:negative regulation of excitatory postsynaptic potential"/>
    <property type="evidence" value="ECO:0000250"/>
    <property type="project" value="UniProtKB"/>
</dbReference>
<dbReference type="GO" id="GO:0031647">
    <property type="term" value="P:regulation of protein stability"/>
    <property type="evidence" value="ECO:0000250"/>
    <property type="project" value="UniProtKB"/>
</dbReference>
<dbReference type="Gene3D" id="2.60.40.10">
    <property type="entry name" value="Immunoglobulins"/>
    <property type="match status" value="1"/>
</dbReference>
<dbReference type="InterPro" id="IPR013162">
    <property type="entry name" value="CD80_C2-set"/>
</dbReference>
<dbReference type="InterPro" id="IPR007110">
    <property type="entry name" value="Ig-like_dom"/>
</dbReference>
<dbReference type="InterPro" id="IPR036179">
    <property type="entry name" value="Ig-like_dom_sf"/>
</dbReference>
<dbReference type="InterPro" id="IPR013783">
    <property type="entry name" value="Ig-like_fold"/>
</dbReference>
<dbReference type="InterPro" id="IPR042864">
    <property type="entry name" value="TMEM25"/>
</dbReference>
<dbReference type="PANTHER" id="PTHR47224">
    <property type="entry name" value="TRANSMEMBRANE PROTEIN 25"/>
    <property type="match status" value="1"/>
</dbReference>
<dbReference type="PANTHER" id="PTHR47224:SF1">
    <property type="entry name" value="TRANSMEMBRANE PROTEIN 25"/>
    <property type="match status" value="1"/>
</dbReference>
<dbReference type="Pfam" id="PF08205">
    <property type="entry name" value="C2-set_2"/>
    <property type="match status" value="1"/>
</dbReference>
<dbReference type="SUPFAM" id="SSF48726">
    <property type="entry name" value="Immunoglobulin"/>
    <property type="match status" value="1"/>
</dbReference>
<dbReference type="PROSITE" id="PS50835">
    <property type="entry name" value="IG_LIKE"/>
    <property type="match status" value="1"/>
</dbReference>
<reference key="1">
    <citation type="journal article" date="2003" name="Genome Res.">
        <title>The secreted protein discovery initiative (SPDI), a large-scale effort to identify novel human secreted and transmembrane proteins: a bioinformatics assessment.</title>
        <authorList>
            <person name="Clark H.F."/>
            <person name="Gurney A.L."/>
            <person name="Abaya E."/>
            <person name="Baker K."/>
            <person name="Baldwin D.T."/>
            <person name="Brush J."/>
            <person name="Chen J."/>
            <person name="Chow B."/>
            <person name="Chui C."/>
            <person name="Crowley C."/>
            <person name="Currell B."/>
            <person name="Deuel B."/>
            <person name="Dowd P."/>
            <person name="Eaton D."/>
            <person name="Foster J.S."/>
            <person name="Grimaldi C."/>
            <person name="Gu Q."/>
            <person name="Hass P.E."/>
            <person name="Heldens S."/>
            <person name="Huang A."/>
            <person name="Kim H.S."/>
            <person name="Klimowski L."/>
            <person name="Jin Y."/>
            <person name="Johnson S."/>
            <person name="Lee J."/>
            <person name="Lewis L."/>
            <person name="Liao D."/>
            <person name="Mark M.R."/>
            <person name="Robbie E."/>
            <person name="Sanchez C."/>
            <person name="Schoenfeld J."/>
            <person name="Seshagiri S."/>
            <person name="Simmons L."/>
            <person name="Singh J."/>
            <person name="Smith V."/>
            <person name="Stinson J."/>
            <person name="Vagts A."/>
            <person name="Vandlen R.L."/>
            <person name="Watanabe C."/>
            <person name="Wieand D."/>
            <person name="Woods K."/>
            <person name="Xie M.-H."/>
            <person name="Yansura D.G."/>
            <person name="Yi S."/>
            <person name="Yu G."/>
            <person name="Yuan J."/>
            <person name="Zhang M."/>
            <person name="Zhang Z."/>
            <person name="Goddard A.D."/>
            <person name="Wood W.I."/>
            <person name="Godowski P.J."/>
            <person name="Gray A.M."/>
        </authorList>
    </citation>
    <scope>NUCLEOTIDE SEQUENCE [LARGE SCALE MRNA] (ISOFORM 2)</scope>
</reference>
<reference key="2">
    <citation type="journal article" date="2004" name="Nat. Genet.">
        <title>Complete sequencing and characterization of 21,243 full-length human cDNAs.</title>
        <authorList>
            <person name="Ota T."/>
            <person name="Suzuki Y."/>
            <person name="Nishikawa T."/>
            <person name="Otsuki T."/>
            <person name="Sugiyama T."/>
            <person name="Irie R."/>
            <person name="Wakamatsu A."/>
            <person name="Hayashi K."/>
            <person name="Sato H."/>
            <person name="Nagai K."/>
            <person name="Kimura K."/>
            <person name="Makita H."/>
            <person name="Sekine M."/>
            <person name="Obayashi M."/>
            <person name="Nishi T."/>
            <person name="Shibahara T."/>
            <person name="Tanaka T."/>
            <person name="Ishii S."/>
            <person name="Yamamoto J."/>
            <person name="Saito K."/>
            <person name="Kawai Y."/>
            <person name="Isono Y."/>
            <person name="Nakamura Y."/>
            <person name="Nagahari K."/>
            <person name="Murakami K."/>
            <person name="Yasuda T."/>
            <person name="Iwayanagi T."/>
            <person name="Wagatsuma M."/>
            <person name="Shiratori A."/>
            <person name="Sudo H."/>
            <person name="Hosoiri T."/>
            <person name="Kaku Y."/>
            <person name="Kodaira H."/>
            <person name="Kondo H."/>
            <person name="Sugawara M."/>
            <person name="Takahashi M."/>
            <person name="Kanda K."/>
            <person name="Yokoi T."/>
            <person name="Furuya T."/>
            <person name="Kikkawa E."/>
            <person name="Omura Y."/>
            <person name="Abe K."/>
            <person name="Kamihara K."/>
            <person name="Katsuta N."/>
            <person name="Sato K."/>
            <person name="Tanikawa M."/>
            <person name="Yamazaki M."/>
            <person name="Ninomiya K."/>
            <person name="Ishibashi T."/>
            <person name="Yamashita H."/>
            <person name="Murakawa K."/>
            <person name="Fujimori K."/>
            <person name="Tanai H."/>
            <person name="Kimata M."/>
            <person name="Watanabe M."/>
            <person name="Hiraoka S."/>
            <person name="Chiba Y."/>
            <person name="Ishida S."/>
            <person name="Ono Y."/>
            <person name="Takiguchi S."/>
            <person name="Watanabe S."/>
            <person name="Yosida M."/>
            <person name="Hotuta T."/>
            <person name="Kusano J."/>
            <person name="Kanehori K."/>
            <person name="Takahashi-Fujii A."/>
            <person name="Hara H."/>
            <person name="Tanase T.-O."/>
            <person name="Nomura Y."/>
            <person name="Togiya S."/>
            <person name="Komai F."/>
            <person name="Hara R."/>
            <person name="Takeuchi K."/>
            <person name="Arita M."/>
            <person name="Imose N."/>
            <person name="Musashino K."/>
            <person name="Yuuki H."/>
            <person name="Oshima A."/>
            <person name="Sasaki N."/>
            <person name="Aotsuka S."/>
            <person name="Yoshikawa Y."/>
            <person name="Matsunawa H."/>
            <person name="Ichihara T."/>
            <person name="Shiohata N."/>
            <person name="Sano S."/>
            <person name="Moriya S."/>
            <person name="Momiyama H."/>
            <person name="Satoh N."/>
            <person name="Takami S."/>
            <person name="Terashima Y."/>
            <person name="Suzuki O."/>
            <person name="Nakagawa S."/>
            <person name="Senoh A."/>
            <person name="Mizoguchi H."/>
            <person name="Goto Y."/>
            <person name="Shimizu F."/>
            <person name="Wakebe H."/>
            <person name="Hishigaki H."/>
            <person name="Watanabe T."/>
            <person name="Sugiyama A."/>
            <person name="Takemoto M."/>
            <person name="Kawakami B."/>
            <person name="Yamazaki M."/>
            <person name="Watanabe K."/>
            <person name="Kumagai A."/>
            <person name="Itakura S."/>
            <person name="Fukuzumi Y."/>
            <person name="Fujimori Y."/>
            <person name="Komiyama M."/>
            <person name="Tashiro H."/>
            <person name="Tanigami A."/>
            <person name="Fujiwara T."/>
            <person name="Ono T."/>
            <person name="Yamada K."/>
            <person name="Fujii Y."/>
            <person name="Ozaki K."/>
            <person name="Hirao M."/>
            <person name="Ohmori Y."/>
            <person name="Kawabata A."/>
            <person name="Hikiji T."/>
            <person name="Kobatake N."/>
            <person name="Inagaki H."/>
            <person name="Ikema Y."/>
            <person name="Okamoto S."/>
            <person name="Okitani R."/>
            <person name="Kawakami T."/>
            <person name="Noguchi S."/>
            <person name="Itoh T."/>
            <person name="Shigeta K."/>
            <person name="Senba T."/>
            <person name="Matsumura K."/>
            <person name="Nakajima Y."/>
            <person name="Mizuno T."/>
            <person name="Morinaga M."/>
            <person name="Sasaki M."/>
            <person name="Togashi T."/>
            <person name="Oyama M."/>
            <person name="Hata H."/>
            <person name="Watanabe M."/>
            <person name="Komatsu T."/>
            <person name="Mizushima-Sugano J."/>
            <person name="Satoh T."/>
            <person name="Shirai Y."/>
            <person name="Takahashi Y."/>
            <person name="Nakagawa K."/>
            <person name="Okumura K."/>
            <person name="Nagase T."/>
            <person name="Nomura N."/>
            <person name="Kikuchi H."/>
            <person name="Masuho Y."/>
            <person name="Yamashita R."/>
            <person name="Nakai K."/>
            <person name="Yada T."/>
            <person name="Nakamura Y."/>
            <person name="Ohara O."/>
            <person name="Isogai T."/>
            <person name="Sugano S."/>
        </authorList>
    </citation>
    <scope>NUCLEOTIDE SEQUENCE [LARGE SCALE MRNA] (ISOFORMS 3; 4 AND 2)</scope>
    <source>
        <tissue>Embryo</tissue>
        <tissue>Testis</tissue>
    </source>
</reference>
<reference key="3">
    <citation type="journal article" date="2005" name="DNA Res.">
        <title>Signal sequence and keyword trap in silico for selection of full-length human cDNAs encoding secretion or membrane proteins from oligo-capped cDNA libraries.</title>
        <authorList>
            <person name="Otsuki T."/>
            <person name="Ota T."/>
            <person name="Nishikawa T."/>
            <person name="Hayashi K."/>
            <person name="Suzuki Y."/>
            <person name="Yamamoto J."/>
            <person name="Wakamatsu A."/>
            <person name="Kimura K."/>
            <person name="Sakamoto K."/>
            <person name="Hatano N."/>
            <person name="Kawai Y."/>
            <person name="Ishii S."/>
            <person name="Saito K."/>
            <person name="Kojima S."/>
            <person name="Sugiyama T."/>
            <person name="Ono T."/>
            <person name="Okano K."/>
            <person name="Yoshikawa Y."/>
            <person name="Aotsuka S."/>
            <person name="Sasaki N."/>
            <person name="Hattori A."/>
            <person name="Okumura K."/>
            <person name="Nagai K."/>
            <person name="Sugano S."/>
            <person name="Isogai T."/>
        </authorList>
    </citation>
    <scope>NUCLEOTIDE SEQUENCE [LARGE SCALE MRNA] (ISOFORM 5)</scope>
    <scope>VARIANT ARG-342</scope>
    <source>
        <tissue>Placenta</tissue>
    </source>
</reference>
<reference key="4">
    <citation type="submission" date="2007-02" db="EMBL/GenBank/DDBJ databases">
        <authorList>
            <consortium name="NHLBI resequencing and genotyping service (RS&amp;G)"/>
        </authorList>
    </citation>
    <scope>NUCLEOTIDE SEQUENCE [GENOMIC DNA]</scope>
</reference>
<reference key="5">
    <citation type="journal article" date="2006" name="Nature">
        <title>Human chromosome 11 DNA sequence and analysis including novel gene identification.</title>
        <authorList>
            <person name="Taylor T.D."/>
            <person name="Noguchi H."/>
            <person name="Totoki Y."/>
            <person name="Toyoda A."/>
            <person name="Kuroki Y."/>
            <person name="Dewar K."/>
            <person name="Lloyd C."/>
            <person name="Itoh T."/>
            <person name="Takeda T."/>
            <person name="Kim D.-W."/>
            <person name="She X."/>
            <person name="Barlow K.F."/>
            <person name="Bloom T."/>
            <person name="Bruford E."/>
            <person name="Chang J.L."/>
            <person name="Cuomo C.A."/>
            <person name="Eichler E."/>
            <person name="FitzGerald M.G."/>
            <person name="Jaffe D.B."/>
            <person name="LaButti K."/>
            <person name="Nicol R."/>
            <person name="Park H.-S."/>
            <person name="Seaman C."/>
            <person name="Sougnez C."/>
            <person name="Yang X."/>
            <person name="Zimmer A.R."/>
            <person name="Zody M.C."/>
            <person name="Birren B.W."/>
            <person name="Nusbaum C."/>
            <person name="Fujiyama A."/>
            <person name="Hattori M."/>
            <person name="Rogers J."/>
            <person name="Lander E.S."/>
            <person name="Sakaki Y."/>
        </authorList>
    </citation>
    <scope>NUCLEOTIDE SEQUENCE [LARGE SCALE GENOMIC DNA]</scope>
</reference>
<reference key="6">
    <citation type="submission" date="2005-07" db="EMBL/GenBank/DDBJ databases">
        <authorList>
            <person name="Mural R.J."/>
            <person name="Istrail S."/>
            <person name="Sutton G.G."/>
            <person name="Florea L."/>
            <person name="Halpern A.L."/>
            <person name="Mobarry C.M."/>
            <person name="Lippert R."/>
            <person name="Walenz B."/>
            <person name="Shatkay H."/>
            <person name="Dew I."/>
            <person name="Miller J.R."/>
            <person name="Flanigan M.J."/>
            <person name="Edwards N.J."/>
            <person name="Bolanos R."/>
            <person name="Fasulo D."/>
            <person name="Halldorsson B.V."/>
            <person name="Hannenhalli S."/>
            <person name="Turner R."/>
            <person name="Yooseph S."/>
            <person name="Lu F."/>
            <person name="Nusskern D.R."/>
            <person name="Shue B.C."/>
            <person name="Zheng X.H."/>
            <person name="Zhong F."/>
            <person name="Delcher A.L."/>
            <person name="Huson D.H."/>
            <person name="Kravitz S.A."/>
            <person name="Mouchard L."/>
            <person name="Reinert K."/>
            <person name="Remington K.A."/>
            <person name="Clark A.G."/>
            <person name="Waterman M.S."/>
            <person name="Eichler E.E."/>
            <person name="Adams M.D."/>
            <person name="Hunkapiller M.W."/>
            <person name="Myers E.W."/>
            <person name="Venter J.C."/>
        </authorList>
    </citation>
    <scope>NUCLEOTIDE SEQUENCE [LARGE SCALE GENOMIC DNA]</scope>
</reference>
<reference key="7">
    <citation type="journal article" date="2004" name="Genome Res.">
        <title>The status, quality, and expansion of the NIH full-length cDNA project: the Mammalian Gene Collection (MGC).</title>
        <authorList>
            <consortium name="The MGC Project Team"/>
        </authorList>
    </citation>
    <scope>NUCLEOTIDE SEQUENCE [LARGE SCALE MRNA] (ISOFORMS 1 AND 2)</scope>
    <scope>VARIANT ARG-342</scope>
    <source>
        <tissue>Brain</tissue>
        <tissue>Ovary</tissue>
    </source>
</reference>
<reference key="8">
    <citation type="journal article" date="2004" name="Protein Sci.">
        <title>Signal peptide prediction based on analysis of experimentally verified cleavage sites.</title>
        <authorList>
            <person name="Zhang Z."/>
            <person name="Henzel W.J."/>
        </authorList>
    </citation>
    <scope>PROTEIN SEQUENCE OF 27-41</scope>
</reference>
<reference key="9">
    <citation type="journal article" date="2019" name="J. Clin. Invest.">
        <title>TMEM25 modulates neuronal excitability and NMDA receptor subunit NR2B degradation.</title>
        <authorList>
            <person name="Zhang H."/>
            <person name="Tian X."/>
            <person name="Lu X."/>
            <person name="Xu D."/>
            <person name="Guo Y."/>
            <person name="Dong Z."/>
            <person name="Li Y."/>
            <person name="Ma Y."/>
            <person name="Chen C."/>
            <person name="Yang Y."/>
            <person name="Yang M."/>
            <person name="Yang Y."/>
            <person name="Liu F."/>
            <person name="Zhou R."/>
            <person name="He M."/>
            <person name="Xiao F."/>
            <person name="Wang X."/>
        </authorList>
    </citation>
    <scope>FUNCTION</scope>
    <scope>TISSUE SPECIFICITY</scope>
</reference>